<proteinExistence type="evidence at transcript level"/>
<feature type="transit peptide" description="Mitochondrion" evidence="2">
    <location>
        <begin position="1"/>
        <end status="unknown"/>
    </location>
</feature>
<feature type="chain" id="PRO_0000284934" description="3-hydroxyisobutyryl-CoA hydrolase, mitochondrial">
    <location>
        <begin status="unknown"/>
        <end position="385"/>
    </location>
</feature>
<feature type="binding site" evidence="1">
    <location>
        <position position="120"/>
    </location>
    <ligand>
        <name>substrate</name>
    </ligand>
</feature>
<feature type="binding site" evidence="1">
    <location>
        <position position="145"/>
    </location>
    <ligand>
        <name>substrate</name>
    </ligand>
</feature>
<feature type="binding site" evidence="1">
    <location>
        <position position="168"/>
    </location>
    <ligand>
        <name>substrate</name>
    </ligand>
</feature>
<feature type="binding site" evidence="1">
    <location>
        <position position="176"/>
    </location>
    <ligand>
        <name>substrate</name>
    </ligand>
</feature>
<name>HIBCH_XENTR</name>
<reference key="1">
    <citation type="submission" date="2006-10" db="EMBL/GenBank/DDBJ databases">
        <authorList>
            <consortium name="Sanger Xenopus tropicalis EST/cDNA project"/>
        </authorList>
    </citation>
    <scope>NUCLEOTIDE SEQUENCE [LARGE SCALE MRNA]</scope>
    <source>
        <tissue>Gastrula</tissue>
    </source>
</reference>
<reference key="2">
    <citation type="submission" date="2007-12" db="EMBL/GenBank/DDBJ databases">
        <authorList>
            <consortium name="NIH - Xenopus Gene Collection (XGC) project"/>
        </authorList>
    </citation>
    <scope>NUCLEOTIDE SEQUENCE [LARGE SCALE MRNA]</scope>
    <source>
        <tissue>Embryo</tissue>
    </source>
</reference>
<organism>
    <name type="scientific">Xenopus tropicalis</name>
    <name type="common">Western clawed frog</name>
    <name type="synonym">Silurana tropicalis</name>
    <dbReference type="NCBI Taxonomy" id="8364"/>
    <lineage>
        <taxon>Eukaryota</taxon>
        <taxon>Metazoa</taxon>
        <taxon>Chordata</taxon>
        <taxon>Craniata</taxon>
        <taxon>Vertebrata</taxon>
        <taxon>Euteleostomi</taxon>
        <taxon>Amphibia</taxon>
        <taxon>Batrachia</taxon>
        <taxon>Anura</taxon>
        <taxon>Pipoidea</taxon>
        <taxon>Pipidae</taxon>
        <taxon>Xenopodinae</taxon>
        <taxon>Xenopus</taxon>
        <taxon>Silurana</taxon>
    </lineage>
</organism>
<keyword id="KW-0101">Branched-chain amino acid catabolism</keyword>
<keyword id="KW-0378">Hydrolase</keyword>
<keyword id="KW-0496">Mitochondrion</keyword>
<keyword id="KW-1185">Reference proteome</keyword>
<keyword id="KW-0809">Transit peptide</keyword>
<dbReference type="EC" id="3.1.2.4"/>
<dbReference type="EMBL" id="CR761811">
    <property type="protein sequence ID" value="CAJ81517.1"/>
    <property type="molecule type" value="mRNA"/>
</dbReference>
<dbReference type="EMBL" id="BC157188">
    <property type="protein sequence ID" value="AAI57189.1"/>
    <property type="molecule type" value="mRNA"/>
</dbReference>
<dbReference type="RefSeq" id="NP_001016188.1">
    <property type="nucleotide sequence ID" value="NM_001016188.2"/>
</dbReference>
<dbReference type="SMR" id="Q28FR6"/>
<dbReference type="FunCoup" id="Q28FR6">
    <property type="interactions" value="1932"/>
</dbReference>
<dbReference type="STRING" id="8364.ENSXETP00000053461"/>
<dbReference type="PaxDb" id="8364-ENSXETP00000033364"/>
<dbReference type="GeneID" id="548942"/>
<dbReference type="KEGG" id="xtr:548942"/>
<dbReference type="AGR" id="Xenbase:XB-GENE-947696"/>
<dbReference type="CTD" id="26275"/>
<dbReference type="Xenbase" id="XB-GENE-947696">
    <property type="gene designation" value="hibch"/>
</dbReference>
<dbReference type="eggNOG" id="KOG1684">
    <property type="taxonomic scope" value="Eukaryota"/>
</dbReference>
<dbReference type="HOGENOM" id="CLU_009834_22_1_1"/>
<dbReference type="InParanoid" id="Q28FR6"/>
<dbReference type="OMA" id="EVFTMEY"/>
<dbReference type="OrthoDB" id="1737613at2759"/>
<dbReference type="PhylomeDB" id="Q28FR6"/>
<dbReference type="TreeFam" id="TF314329"/>
<dbReference type="UniPathway" id="UPA00362"/>
<dbReference type="Proteomes" id="UP000008143">
    <property type="component" value="Chromosome 9"/>
</dbReference>
<dbReference type="Bgee" id="ENSXETG00000015247">
    <property type="expression patterns" value="Expressed in skeletal muscle tissue and 14 other cell types or tissues"/>
</dbReference>
<dbReference type="ExpressionAtlas" id="Q28FR6">
    <property type="expression patterns" value="differential"/>
</dbReference>
<dbReference type="GO" id="GO:0005739">
    <property type="term" value="C:mitochondrion"/>
    <property type="evidence" value="ECO:0007669"/>
    <property type="project" value="UniProtKB-SubCell"/>
</dbReference>
<dbReference type="GO" id="GO:0003860">
    <property type="term" value="F:3-hydroxyisobutyryl-CoA hydrolase activity"/>
    <property type="evidence" value="ECO:0007669"/>
    <property type="project" value="UniProtKB-EC"/>
</dbReference>
<dbReference type="GO" id="GO:0006574">
    <property type="term" value="P:valine catabolic process"/>
    <property type="evidence" value="ECO:0007669"/>
    <property type="project" value="UniProtKB-UniPathway"/>
</dbReference>
<dbReference type="CDD" id="cd06558">
    <property type="entry name" value="crotonase-like"/>
    <property type="match status" value="1"/>
</dbReference>
<dbReference type="FunFam" id="3.90.226.10:FF:000026">
    <property type="entry name" value="3-hydroxyisobutyryl-CoA hydrolase, mitochondrial"/>
    <property type="match status" value="1"/>
</dbReference>
<dbReference type="Gene3D" id="3.90.226.10">
    <property type="entry name" value="2-enoyl-CoA Hydratase, Chain A, domain 1"/>
    <property type="match status" value="1"/>
</dbReference>
<dbReference type="InterPro" id="IPR029045">
    <property type="entry name" value="ClpP/crotonase-like_dom_sf"/>
</dbReference>
<dbReference type="InterPro" id="IPR045004">
    <property type="entry name" value="ECH_dom"/>
</dbReference>
<dbReference type="InterPro" id="IPR032259">
    <property type="entry name" value="HIBYL-CoA-H"/>
</dbReference>
<dbReference type="NCBIfam" id="NF004127">
    <property type="entry name" value="PRK05617.1"/>
    <property type="match status" value="1"/>
</dbReference>
<dbReference type="PANTHER" id="PTHR43176:SF3">
    <property type="entry name" value="3-HYDROXYISOBUTYRYL-COA HYDROLASE, MITOCHONDRIAL"/>
    <property type="match status" value="1"/>
</dbReference>
<dbReference type="PANTHER" id="PTHR43176">
    <property type="entry name" value="3-HYDROXYISOBUTYRYL-COA HYDROLASE-RELATED"/>
    <property type="match status" value="1"/>
</dbReference>
<dbReference type="Pfam" id="PF16113">
    <property type="entry name" value="ECH_2"/>
    <property type="match status" value="1"/>
</dbReference>
<dbReference type="SUPFAM" id="SSF52096">
    <property type="entry name" value="ClpP/crotonase"/>
    <property type="match status" value="1"/>
</dbReference>
<sequence length="385" mass="42336">MSLGLLESQLRLKVFGRLQVIRQHLRMTNHTVKDGECLLTKAGCAGVITLNRPKALNALNLGMIRLIYPQLGLWEEDPETYLVIIKGVGGKAFCAGGDIRAVTDAGKAGDRLAQDFFREEYILNNAIGTYKKPYVALIDGITMGGGVGLSVHGHFRVASENTLFAMPETAIGLFPDVGGGYFLPRLPGKLGLYLALTGFRLKGSDVQKAGIATHFVESEKIPSLEQDLVAMKCPSKENVADVLDSYHNKSYAAQDKPFVLAEHLDKINSLFSASSVEAIIENLRCDGSSFALKQLQTLSTMSPTSLKITFRQLKEGSSMSLQEVLTMEYRLSQACMKGYDFYEGVRAVLIDKNQNAKWNPELLEEVTDDYIDSYFTSLGNSDLKL</sequence>
<accession>Q28FR6</accession>
<accession>A9ULB0</accession>
<gene>
    <name type="primary">hibch</name>
    <name type="ORF">TGas039e14.1</name>
</gene>
<protein>
    <recommendedName>
        <fullName>3-hydroxyisobutyryl-CoA hydrolase, mitochondrial</fullName>
        <ecNumber>3.1.2.4</ecNumber>
    </recommendedName>
    <alternativeName>
        <fullName>3-hydroxyisobutyryl-coenzyme A hydrolase</fullName>
        <shortName>HIB-CoA hydrolase</shortName>
        <shortName>HIBYL-CoA-H</shortName>
    </alternativeName>
</protein>
<comment type="function">
    <text evidence="1">Hydrolyzes 3-hydroxyisobutyryl-CoA (HIBYL-CoA), a saline catabolite. Has high activity toward isobutyryl-CoA. Could be an isobutyryl-CoA dehydrogenase that functions in valine catabolism. Also hydrolyzes 3-hydroxypropanoyl-CoA (By similarity).</text>
</comment>
<comment type="catalytic activity">
    <reaction>
        <text>3-hydroxy-2-methylpropanoyl-CoA + H2O = 3-hydroxy-2-methylpropanoate + CoA + H(+)</text>
        <dbReference type="Rhea" id="RHEA:20888"/>
        <dbReference type="ChEBI" id="CHEBI:11805"/>
        <dbReference type="ChEBI" id="CHEBI:15377"/>
        <dbReference type="ChEBI" id="CHEBI:15378"/>
        <dbReference type="ChEBI" id="CHEBI:57287"/>
        <dbReference type="ChEBI" id="CHEBI:57340"/>
        <dbReference type="EC" id="3.1.2.4"/>
    </reaction>
</comment>
<comment type="pathway">
    <text>Amino-acid degradation; L-valine degradation.</text>
</comment>
<comment type="subcellular location">
    <subcellularLocation>
        <location evidence="1">Mitochondrion</location>
    </subcellularLocation>
</comment>
<comment type="similarity">
    <text evidence="3">Belongs to the enoyl-CoA hydratase/isomerase family.</text>
</comment>
<evidence type="ECO:0000250" key="1"/>
<evidence type="ECO:0000255" key="2"/>
<evidence type="ECO:0000305" key="3"/>